<accession>B2GLY8</accession>
<gene>
    <name evidence="1" type="primary">atpA</name>
    <name type="ordered locus">KRH_09820</name>
</gene>
<organism>
    <name type="scientific">Kocuria rhizophila (strain ATCC 9341 / DSM 348 / NBRC 103217 / DC2201)</name>
    <dbReference type="NCBI Taxonomy" id="378753"/>
    <lineage>
        <taxon>Bacteria</taxon>
        <taxon>Bacillati</taxon>
        <taxon>Actinomycetota</taxon>
        <taxon>Actinomycetes</taxon>
        <taxon>Micrococcales</taxon>
        <taxon>Micrococcaceae</taxon>
        <taxon>Kocuria</taxon>
    </lineage>
</organism>
<dbReference type="EC" id="7.1.2.2" evidence="1"/>
<dbReference type="EMBL" id="AP009152">
    <property type="protein sequence ID" value="BAG29329.1"/>
    <property type="molecule type" value="Genomic_DNA"/>
</dbReference>
<dbReference type="RefSeq" id="WP_012398050.1">
    <property type="nucleotide sequence ID" value="NC_010617.1"/>
</dbReference>
<dbReference type="SMR" id="B2GLY8"/>
<dbReference type="STRING" id="378753.KRH_09820"/>
<dbReference type="KEGG" id="krh:KRH_09820"/>
<dbReference type="eggNOG" id="COG0056">
    <property type="taxonomic scope" value="Bacteria"/>
</dbReference>
<dbReference type="HOGENOM" id="CLU_010091_2_1_11"/>
<dbReference type="OrthoDB" id="9803053at2"/>
<dbReference type="Proteomes" id="UP000008838">
    <property type="component" value="Chromosome"/>
</dbReference>
<dbReference type="GO" id="GO:0005886">
    <property type="term" value="C:plasma membrane"/>
    <property type="evidence" value="ECO:0007669"/>
    <property type="project" value="UniProtKB-SubCell"/>
</dbReference>
<dbReference type="GO" id="GO:0045259">
    <property type="term" value="C:proton-transporting ATP synthase complex"/>
    <property type="evidence" value="ECO:0007669"/>
    <property type="project" value="UniProtKB-KW"/>
</dbReference>
<dbReference type="GO" id="GO:0043531">
    <property type="term" value="F:ADP binding"/>
    <property type="evidence" value="ECO:0007669"/>
    <property type="project" value="TreeGrafter"/>
</dbReference>
<dbReference type="GO" id="GO:0005524">
    <property type="term" value="F:ATP binding"/>
    <property type="evidence" value="ECO:0007669"/>
    <property type="project" value="UniProtKB-UniRule"/>
</dbReference>
<dbReference type="GO" id="GO:0046933">
    <property type="term" value="F:proton-transporting ATP synthase activity, rotational mechanism"/>
    <property type="evidence" value="ECO:0007669"/>
    <property type="project" value="UniProtKB-UniRule"/>
</dbReference>
<dbReference type="CDD" id="cd18113">
    <property type="entry name" value="ATP-synt_F1_alpha_C"/>
    <property type="match status" value="1"/>
</dbReference>
<dbReference type="CDD" id="cd18116">
    <property type="entry name" value="ATP-synt_F1_alpha_N"/>
    <property type="match status" value="1"/>
</dbReference>
<dbReference type="CDD" id="cd01132">
    <property type="entry name" value="F1-ATPase_alpha_CD"/>
    <property type="match status" value="1"/>
</dbReference>
<dbReference type="FunFam" id="1.20.150.20:FF:000001">
    <property type="entry name" value="ATP synthase subunit alpha"/>
    <property type="match status" value="1"/>
</dbReference>
<dbReference type="FunFam" id="3.40.50.300:FF:000002">
    <property type="entry name" value="ATP synthase subunit alpha"/>
    <property type="match status" value="1"/>
</dbReference>
<dbReference type="Gene3D" id="2.40.30.20">
    <property type="match status" value="1"/>
</dbReference>
<dbReference type="Gene3D" id="1.20.150.20">
    <property type="entry name" value="ATP synthase alpha/beta chain, C-terminal domain"/>
    <property type="match status" value="1"/>
</dbReference>
<dbReference type="Gene3D" id="3.40.50.300">
    <property type="entry name" value="P-loop containing nucleotide triphosphate hydrolases"/>
    <property type="match status" value="1"/>
</dbReference>
<dbReference type="HAMAP" id="MF_01346">
    <property type="entry name" value="ATP_synth_alpha_bact"/>
    <property type="match status" value="1"/>
</dbReference>
<dbReference type="InterPro" id="IPR023366">
    <property type="entry name" value="ATP_synth_asu-like_sf"/>
</dbReference>
<dbReference type="InterPro" id="IPR000793">
    <property type="entry name" value="ATP_synth_asu_C"/>
</dbReference>
<dbReference type="InterPro" id="IPR038376">
    <property type="entry name" value="ATP_synth_asu_C_sf"/>
</dbReference>
<dbReference type="InterPro" id="IPR033732">
    <property type="entry name" value="ATP_synth_F1_a_nt-bd_dom"/>
</dbReference>
<dbReference type="InterPro" id="IPR005294">
    <property type="entry name" value="ATP_synth_F1_asu"/>
</dbReference>
<dbReference type="InterPro" id="IPR020003">
    <property type="entry name" value="ATPase_a/bsu_AS"/>
</dbReference>
<dbReference type="InterPro" id="IPR004100">
    <property type="entry name" value="ATPase_F1/V1/A1_a/bsu_N"/>
</dbReference>
<dbReference type="InterPro" id="IPR036121">
    <property type="entry name" value="ATPase_F1/V1/A1_a/bsu_N_sf"/>
</dbReference>
<dbReference type="InterPro" id="IPR000194">
    <property type="entry name" value="ATPase_F1/V1/A1_a/bsu_nucl-bd"/>
</dbReference>
<dbReference type="InterPro" id="IPR027417">
    <property type="entry name" value="P-loop_NTPase"/>
</dbReference>
<dbReference type="NCBIfam" id="TIGR00962">
    <property type="entry name" value="atpA"/>
    <property type="match status" value="1"/>
</dbReference>
<dbReference type="NCBIfam" id="NF009884">
    <property type="entry name" value="PRK13343.1"/>
    <property type="match status" value="1"/>
</dbReference>
<dbReference type="PANTHER" id="PTHR48082">
    <property type="entry name" value="ATP SYNTHASE SUBUNIT ALPHA, MITOCHONDRIAL"/>
    <property type="match status" value="1"/>
</dbReference>
<dbReference type="PANTHER" id="PTHR48082:SF2">
    <property type="entry name" value="ATP SYNTHASE SUBUNIT ALPHA, MITOCHONDRIAL"/>
    <property type="match status" value="1"/>
</dbReference>
<dbReference type="Pfam" id="PF00006">
    <property type="entry name" value="ATP-synt_ab"/>
    <property type="match status" value="1"/>
</dbReference>
<dbReference type="Pfam" id="PF00306">
    <property type="entry name" value="ATP-synt_ab_C"/>
    <property type="match status" value="1"/>
</dbReference>
<dbReference type="Pfam" id="PF02874">
    <property type="entry name" value="ATP-synt_ab_N"/>
    <property type="match status" value="1"/>
</dbReference>
<dbReference type="SUPFAM" id="SSF47917">
    <property type="entry name" value="C-terminal domain of alpha and beta subunits of F1 ATP synthase"/>
    <property type="match status" value="1"/>
</dbReference>
<dbReference type="SUPFAM" id="SSF50615">
    <property type="entry name" value="N-terminal domain of alpha and beta subunits of F1 ATP synthase"/>
    <property type="match status" value="1"/>
</dbReference>
<dbReference type="SUPFAM" id="SSF52540">
    <property type="entry name" value="P-loop containing nucleoside triphosphate hydrolases"/>
    <property type="match status" value="1"/>
</dbReference>
<dbReference type="PROSITE" id="PS00152">
    <property type="entry name" value="ATPASE_ALPHA_BETA"/>
    <property type="match status" value="1"/>
</dbReference>
<proteinExistence type="inferred from homology"/>
<sequence length="541" mass="58070">MADVTINADEVRSALNDFAASYDPGNVERVEVGRVSSAADGIAHVEGLPSVMANELLKFENGVLGLALNLDTRDIGVVVLGDFQGIEEGQEVHRTGEVLSVPVGEGYLGRVVDPLGEPLDDLGPIATDGRRELELQAPGVTMRKSVHEPLQTGIKAIDAMIPIGRGQRQLIIGDRQTGKTAIAVDAILNQRSNWESGDVEKQVRCIYVAVGQKASTIAAVRQTLEDNGALEYTTIVAAPASESAGLKYLAPYAGSAIGQHWMYGGKHVLIVFDDLSKQAEAYRAVSLLLRRPPGREAYPGDVFYLHSRLLERCAKLSDELGAGSMTGLPIIETKANDVSAFIPTNVISITDGQIFLQSDLFNANQRPAVDVGISVSRVGGAAQVKAMKKVSGTLKLDLASYRSMQAFAMFASDLDAASRQQLTRGERLMELLKQPQYTPYPVADQVVSIWAGTTGQLDDVDVANVADFERALLDQVRRTTNVMDSINSTGKLEDDAVAALKTAVAEVKRDFHGSKHGIEPGVEEHESLGATAVNQETIVKK</sequence>
<reference key="1">
    <citation type="journal article" date="2008" name="J. Bacteriol.">
        <title>Complete genome sequence of the soil actinomycete Kocuria rhizophila.</title>
        <authorList>
            <person name="Takarada H."/>
            <person name="Sekine M."/>
            <person name="Kosugi H."/>
            <person name="Matsuo Y."/>
            <person name="Fujisawa T."/>
            <person name="Omata S."/>
            <person name="Kishi E."/>
            <person name="Shimizu A."/>
            <person name="Tsukatani N."/>
            <person name="Tanikawa S."/>
            <person name="Fujita N."/>
            <person name="Harayama S."/>
        </authorList>
    </citation>
    <scope>NUCLEOTIDE SEQUENCE [LARGE SCALE GENOMIC DNA]</scope>
    <source>
        <strain>ATCC 9341 / DSM 348 / NBRC 103217 / DC2201</strain>
    </source>
</reference>
<comment type="function">
    <text evidence="1">Produces ATP from ADP in the presence of a proton gradient across the membrane. The alpha chain is a regulatory subunit.</text>
</comment>
<comment type="catalytic activity">
    <reaction evidence="1">
        <text>ATP + H2O + 4 H(+)(in) = ADP + phosphate + 5 H(+)(out)</text>
        <dbReference type="Rhea" id="RHEA:57720"/>
        <dbReference type="ChEBI" id="CHEBI:15377"/>
        <dbReference type="ChEBI" id="CHEBI:15378"/>
        <dbReference type="ChEBI" id="CHEBI:30616"/>
        <dbReference type="ChEBI" id="CHEBI:43474"/>
        <dbReference type="ChEBI" id="CHEBI:456216"/>
        <dbReference type="EC" id="7.1.2.2"/>
    </reaction>
</comment>
<comment type="subunit">
    <text evidence="1">F-type ATPases have 2 components, CF(1) - the catalytic core - and CF(0) - the membrane proton channel. CF(1) has five subunits: alpha(3), beta(3), gamma(1), delta(1), epsilon(1). CF(0) has three main subunits: a(1), b(2) and c(9-12). The alpha and beta chains form an alternating ring which encloses part of the gamma chain. CF(1) is attached to CF(0) by a central stalk formed by the gamma and epsilon chains, while a peripheral stalk is formed by the delta and b chains.</text>
</comment>
<comment type="subcellular location">
    <subcellularLocation>
        <location evidence="1">Cell membrane</location>
        <topology evidence="1">Peripheral membrane protein</topology>
    </subcellularLocation>
</comment>
<comment type="similarity">
    <text evidence="1">Belongs to the ATPase alpha/beta chains family.</text>
</comment>
<keyword id="KW-0066">ATP synthesis</keyword>
<keyword id="KW-0067">ATP-binding</keyword>
<keyword id="KW-1003">Cell membrane</keyword>
<keyword id="KW-0139">CF(1)</keyword>
<keyword id="KW-0375">Hydrogen ion transport</keyword>
<keyword id="KW-0406">Ion transport</keyword>
<keyword id="KW-0472">Membrane</keyword>
<keyword id="KW-0547">Nucleotide-binding</keyword>
<keyword id="KW-1185">Reference proteome</keyword>
<keyword id="KW-1278">Translocase</keyword>
<keyword id="KW-0813">Transport</keyword>
<name>ATPA_KOCRD</name>
<protein>
    <recommendedName>
        <fullName evidence="1">ATP synthase subunit alpha</fullName>
        <ecNumber evidence="1">7.1.2.2</ecNumber>
    </recommendedName>
    <alternativeName>
        <fullName evidence="1">ATP synthase F1 sector subunit alpha</fullName>
    </alternativeName>
    <alternativeName>
        <fullName evidence="1">F-ATPase subunit alpha</fullName>
    </alternativeName>
</protein>
<evidence type="ECO:0000255" key="1">
    <source>
        <dbReference type="HAMAP-Rule" id="MF_01346"/>
    </source>
</evidence>
<evidence type="ECO:0000256" key="2">
    <source>
        <dbReference type="SAM" id="MobiDB-lite"/>
    </source>
</evidence>
<feature type="chain" id="PRO_1000143396" description="ATP synthase subunit alpha">
    <location>
        <begin position="1"/>
        <end position="541"/>
    </location>
</feature>
<feature type="region of interest" description="Disordered" evidence="2">
    <location>
        <begin position="517"/>
        <end position="541"/>
    </location>
</feature>
<feature type="compositionally biased region" description="Basic and acidic residues" evidence="2">
    <location>
        <begin position="517"/>
        <end position="527"/>
    </location>
</feature>
<feature type="compositionally biased region" description="Polar residues" evidence="2">
    <location>
        <begin position="532"/>
        <end position="541"/>
    </location>
</feature>
<feature type="binding site" evidence="1">
    <location>
        <begin position="173"/>
        <end position="180"/>
    </location>
    <ligand>
        <name>ATP</name>
        <dbReference type="ChEBI" id="CHEBI:30616"/>
    </ligand>
</feature>
<feature type="site" description="Required for activity" evidence="1">
    <location>
        <position position="374"/>
    </location>
</feature>